<dbReference type="EC" id="5.4.3.8" evidence="1"/>
<dbReference type="EMBL" id="AE008922">
    <property type="protein sequence ID" value="AAM42542.1"/>
    <property type="molecule type" value="Genomic_DNA"/>
</dbReference>
<dbReference type="RefSeq" id="NP_638618.1">
    <property type="nucleotide sequence ID" value="NC_003902.1"/>
</dbReference>
<dbReference type="RefSeq" id="WP_011038374.1">
    <property type="nucleotide sequence ID" value="NC_003902.1"/>
</dbReference>
<dbReference type="SMR" id="Q8P5R4"/>
<dbReference type="STRING" id="190485.XCC3272"/>
<dbReference type="EnsemblBacteria" id="AAM42542">
    <property type="protein sequence ID" value="AAM42542"/>
    <property type="gene ID" value="XCC3272"/>
</dbReference>
<dbReference type="KEGG" id="xcc:XCC3272"/>
<dbReference type="PATRIC" id="fig|190485.4.peg.3497"/>
<dbReference type="eggNOG" id="COG0001">
    <property type="taxonomic scope" value="Bacteria"/>
</dbReference>
<dbReference type="HOGENOM" id="CLU_016922_1_5_6"/>
<dbReference type="OrthoDB" id="9801052at2"/>
<dbReference type="UniPathway" id="UPA00251">
    <property type="reaction ID" value="UER00317"/>
</dbReference>
<dbReference type="Proteomes" id="UP000001010">
    <property type="component" value="Chromosome"/>
</dbReference>
<dbReference type="GO" id="GO:0005737">
    <property type="term" value="C:cytoplasm"/>
    <property type="evidence" value="ECO:0007669"/>
    <property type="project" value="UniProtKB-SubCell"/>
</dbReference>
<dbReference type="GO" id="GO:0042286">
    <property type="term" value="F:glutamate-1-semialdehyde 2,1-aminomutase activity"/>
    <property type="evidence" value="ECO:0007669"/>
    <property type="project" value="UniProtKB-UniRule"/>
</dbReference>
<dbReference type="GO" id="GO:0030170">
    <property type="term" value="F:pyridoxal phosphate binding"/>
    <property type="evidence" value="ECO:0007669"/>
    <property type="project" value="InterPro"/>
</dbReference>
<dbReference type="GO" id="GO:0008483">
    <property type="term" value="F:transaminase activity"/>
    <property type="evidence" value="ECO:0007669"/>
    <property type="project" value="InterPro"/>
</dbReference>
<dbReference type="GO" id="GO:0006782">
    <property type="term" value="P:protoporphyrinogen IX biosynthetic process"/>
    <property type="evidence" value="ECO:0007669"/>
    <property type="project" value="UniProtKB-UniRule"/>
</dbReference>
<dbReference type="CDD" id="cd00610">
    <property type="entry name" value="OAT_like"/>
    <property type="match status" value="1"/>
</dbReference>
<dbReference type="FunFam" id="3.40.640.10:FF:000021">
    <property type="entry name" value="Glutamate-1-semialdehyde 2,1-aminomutase"/>
    <property type="match status" value="1"/>
</dbReference>
<dbReference type="Gene3D" id="3.90.1150.10">
    <property type="entry name" value="Aspartate Aminotransferase, domain 1"/>
    <property type="match status" value="1"/>
</dbReference>
<dbReference type="Gene3D" id="3.40.640.10">
    <property type="entry name" value="Type I PLP-dependent aspartate aminotransferase-like (Major domain)"/>
    <property type="match status" value="1"/>
</dbReference>
<dbReference type="HAMAP" id="MF_00375">
    <property type="entry name" value="HemL_aminotrans_3"/>
    <property type="match status" value="1"/>
</dbReference>
<dbReference type="InterPro" id="IPR004639">
    <property type="entry name" value="4pyrrol_synth_GluAld_NH2Trfase"/>
</dbReference>
<dbReference type="InterPro" id="IPR005814">
    <property type="entry name" value="Aminotrans_3"/>
</dbReference>
<dbReference type="InterPro" id="IPR049704">
    <property type="entry name" value="Aminotrans_3_PPA_site"/>
</dbReference>
<dbReference type="InterPro" id="IPR015424">
    <property type="entry name" value="PyrdxlP-dep_Trfase"/>
</dbReference>
<dbReference type="InterPro" id="IPR015421">
    <property type="entry name" value="PyrdxlP-dep_Trfase_major"/>
</dbReference>
<dbReference type="InterPro" id="IPR015422">
    <property type="entry name" value="PyrdxlP-dep_Trfase_small"/>
</dbReference>
<dbReference type="NCBIfam" id="TIGR00713">
    <property type="entry name" value="hemL"/>
    <property type="match status" value="1"/>
</dbReference>
<dbReference type="NCBIfam" id="NF000818">
    <property type="entry name" value="PRK00062.1"/>
    <property type="match status" value="1"/>
</dbReference>
<dbReference type="PANTHER" id="PTHR43713">
    <property type="entry name" value="GLUTAMATE-1-SEMIALDEHYDE 2,1-AMINOMUTASE"/>
    <property type="match status" value="1"/>
</dbReference>
<dbReference type="PANTHER" id="PTHR43713:SF3">
    <property type="entry name" value="GLUTAMATE-1-SEMIALDEHYDE 2,1-AMINOMUTASE 1, CHLOROPLASTIC-RELATED"/>
    <property type="match status" value="1"/>
</dbReference>
<dbReference type="Pfam" id="PF00202">
    <property type="entry name" value="Aminotran_3"/>
    <property type="match status" value="1"/>
</dbReference>
<dbReference type="SUPFAM" id="SSF53383">
    <property type="entry name" value="PLP-dependent transferases"/>
    <property type="match status" value="1"/>
</dbReference>
<dbReference type="PROSITE" id="PS00600">
    <property type="entry name" value="AA_TRANSFER_CLASS_3"/>
    <property type="match status" value="1"/>
</dbReference>
<sequence>MNHSRSHALFSQAQNLMPGGVNSPVRAFKSVGGEPFFVARADGAYLFDVDGNRYIDYVGSWGPMIAGHNHPAVREAVERAIRDGLSFGAPCEAEVTMAETITRLVPSCEMVRMVNSGTEATLSAIRLARGATGRNRIVKFEGCYHGHGDSFLVKAGSGMLTLGVPTSPGVPAGLSELTATLSFNDFEGATALFDEIGAEVAAVIIEPVVGNANCIPPQAGYLQHLRTLCTRHGALLIFDEVMTGFRVALGGAQAHYGVTPDLTTFGKIIGGGMPVGAYGGGRDLMEQISPAGPIYQAGTLSGNPVAMAAGLAMLQLVQEPGFHARLSETTSLLCEGLEDAARAAGVAVTTNQVGGMFGLFFTDQIVENYAQATACDVTTFNRFFHAMLQQGVYLAPSAYEAGFVSSAHDEAVIEATLAAAREAFADVMR</sequence>
<keyword id="KW-0963">Cytoplasm</keyword>
<keyword id="KW-0413">Isomerase</keyword>
<keyword id="KW-0627">Porphyrin biosynthesis</keyword>
<keyword id="KW-0663">Pyridoxal phosphate</keyword>
<keyword id="KW-1185">Reference proteome</keyword>
<evidence type="ECO:0000255" key="1">
    <source>
        <dbReference type="HAMAP-Rule" id="MF_00375"/>
    </source>
</evidence>
<comment type="catalytic activity">
    <reaction evidence="1">
        <text>(S)-4-amino-5-oxopentanoate = 5-aminolevulinate</text>
        <dbReference type="Rhea" id="RHEA:14265"/>
        <dbReference type="ChEBI" id="CHEBI:57501"/>
        <dbReference type="ChEBI" id="CHEBI:356416"/>
        <dbReference type="EC" id="5.4.3.8"/>
    </reaction>
</comment>
<comment type="cofactor">
    <cofactor evidence="1">
        <name>pyridoxal 5'-phosphate</name>
        <dbReference type="ChEBI" id="CHEBI:597326"/>
    </cofactor>
</comment>
<comment type="pathway">
    <text evidence="1">Porphyrin-containing compound metabolism; protoporphyrin-IX biosynthesis; 5-aminolevulinate from L-glutamyl-tRNA(Glu): step 2/2.</text>
</comment>
<comment type="subunit">
    <text evidence="1">Homodimer.</text>
</comment>
<comment type="subcellular location">
    <subcellularLocation>
        <location evidence="1">Cytoplasm</location>
    </subcellularLocation>
</comment>
<comment type="similarity">
    <text evidence="1">Belongs to the class-III pyridoxal-phosphate-dependent aminotransferase family. HemL subfamily.</text>
</comment>
<reference key="1">
    <citation type="journal article" date="2002" name="Nature">
        <title>Comparison of the genomes of two Xanthomonas pathogens with differing host specificities.</title>
        <authorList>
            <person name="da Silva A.C.R."/>
            <person name="Ferro J.A."/>
            <person name="Reinach F.C."/>
            <person name="Farah C.S."/>
            <person name="Furlan L.R."/>
            <person name="Quaggio R.B."/>
            <person name="Monteiro-Vitorello C.B."/>
            <person name="Van Sluys M.A."/>
            <person name="Almeida N.F. Jr."/>
            <person name="Alves L.M.C."/>
            <person name="do Amaral A.M."/>
            <person name="Bertolini M.C."/>
            <person name="Camargo L.E.A."/>
            <person name="Camarotte G."/>
            <person name="Cannavan F."/>
            <person name="Cardozo J."/>
            <person name="Chambergo F."/>
            <person name="Ciapina L.P."/>
            <person name="Cicarelli R.M.B."/>
            <person name="Coutinho L.L."/>
            <person name="Cursino-Santos J.R."/>
            <person name="El-Dorry H."/>
            <person name="Faria J.B."/>
            <person name="Ferreira A.J.S."/>
            <person name="Ferreira R.C.C."/>
            <person name="Ferro M.I.T."/>
            <person name="Formighieri E.F."/>
            <person name="Franco M.C."/>
            <person name="Greggio C.C."/>
            <person name="Gruber A."/>
            <person name="Katsuyama A.M."/>
            <person name="Kishi L.T."/>
            <person name="Leite R.P."/>
            <person name="Lemos E.G.M."/>
            <person name="Lemos M.V.F."/>
            <person name="Locali E.C."/>
            <person name="Machado M.A."/>
            <person name="Madeira A.M.B.N."/>
            <person name="Martinez-Rossi N.M."/>
            <person name="Martins E.C."/>
            <person name="Meidanis J."/>
            <person name="Menck C.F.M."/>
            <person name="Miyaki C.Y."/>
            <person name="Moon D.H."/>
            <person name="Moreira L.M."/>
            <person name="Novo M.T.M."/>
            <person name="Okura V.K."/>
            <person name="Oliveira M.C."/>
            <person name="Oliveira V.R."/>
            <person name="Pereira H.A."/>
            <person name="Rossi A."/>
            <person name="Sena J.A.D."/>
            <person name="Silva C."/>
            <person name="de Souza R.F."/>
            <person name="Spinola L.A.F."/>
            <person name="Takita M.A."/>
            <person name="Tamura R.E."/>
            <person name="Teixeira E.C."/>
            <person name="Tezza R.I.D."/>
            <person name="Trindade dos Santos M."/>
            <person name="Truffi D."/>
            <person name="Tsai S.M."/>
            <person name="White F.F."/>
            <person name="Setubal J.C."/>
            <person name="Kitajima J.P."/>
        </authorList>
    </citation>
    <scope>NUCLEOTIDE SEQUENCE [LARGE SCALE GENOMIC DNA]</scope>
    <source>
        <strain>ATCC 33913 / DSM 3586 / NCPPB 528 / LMG 568 / P 25</strain>
    </source>
</reference>
<proteinExistence type="inferred from homology"/>
<accession>Q8P5R4</accession>
<organism>
    <name type="scientific">Xanthomonas campestris pv. campestris (strain ATCC 33913 / DSM 3586 / NCPPB 528 / LMG 568 / P 25)</name>
    <dbReference type="NCBI Taxonomy" id="190485"/>
    <lineage>
        <taxon>Bacteria</taxon>
        <taxon>Pseudomonadati</taxon>
        <taxon>Pseudomonadota</taxon>
        <taxon>Gammaproteobacteria</taxon>
        <taxon>Lysobacterales</taxon>
        <taxon>Lysobacteraceae</taxon>
        <taxon>Xanthomonas</taxon>
    </lineage>
</organism>
<name>GSA_XANCP</name>
<gene>
    <name evidence="1" type="primary">hemL</name>
    <name type="ordered locus">XCC3272</name>
</gene>
<feature type="chain" id="PRO_0000120471" description="Glutamate-1-semialdehyde 2,1-aminomutase">
    <location>
        <begin position="1"/>
        <end position="429"/>
    </location>
</feature>
<feature type="modified residue" description="N6-(pyridoxal phosphate)lysine" evidence="1">
    <location>
        <position position="267"/>
    </location>
</feature>
<protein>
    <recommendedName>
        <fullName evidence="1">Glutamate-1-semialdehyde 2,1-aminomutase</fullName>
        <shortName evidence="1">GSA</shortName>
        <ecNumber evidence="1">5.4.3.8</ecNumber>
    </recommendedName>
    <alternativeName>
        <fullName evidence="1">Glutamate-1-semialdehyde aminotransferase</fullName>
        <shortName evidence="1">GSA-AT</shortName>
    </alternativeName>
</protein>